<protein>
    <recommendedName>
        <fullName>Guanine nucleotide exchange factor SopE</fullName>
    </recommendedName>
    <alternativeName>
        <fullName>Effector protein SopE</fullName>
    </alternativeName>
    <alternativeName>
        <fullName>Toxin SopE</fullName>
    </alternativeName>
</protein>
<dbReference type="EMBL" id="AF378111">
    <property type="protein sequence ID" value="AAL67191.1"/>
    <property type="molecule type" value="Genomic_DNA"/>
</dbReference>
<dbReference type="EMBL" id="AF378112">
    <property type="protein sequence ID" value="AAL67192.1"/>
    <property type="molecule type" value="Genomic_DNA"/>
</dbReference>
<dbReference type="SMR" id="Q8VSR2"/>
<dbReference type="STRING" id="523831.SEHO0A_01824"/>
<dbReference type="GO" id="GO:0005576">
    <property type="term" value="C:extracellular region"/>
    <property type="evidence" value="ECO:0007669"/>
    <property type="project" value="UniProtKB-SubCell"/>
</dbReference>
<dbReference type="GO" id="GO:0005096">
    <property type="term" value="F:GTPase activator activity"/>
    <property type="evidence" value="ECO:0007669"/>
    <property type="project" value="UniProtKB-KW"/>
</dbReference>
<dbReference type="GO" id="GO:0005085">
    <property type="term" value="F:guanyl-nucleotide exchange factor activity"/>
    <property type="evidence" value="ECO:0007669"/>
    <property type="project" value="UniProtKB-KW"/>
</dbReference>
<dbReference type="GO" id="GO:0030036">
    <property type="term" value="P:actin cytoskeleton organization"/>
    <property type="evidence" value="ECO:0007669"/>
    <property type="project" value="InterPro"/>
</dbReference>
<dbReference type="Gene3D" id="1.10.4120.10">
    <property type="entry name" value="SopE-like, GEF domain"/>
    <property type="match status" value="1"/>
</dbReference>
<dbReference type="InterPro" id="IPR005414">
    <property type="entry name" value="SopE"/>
</dbReference>
<dbReference type="InterPro" id="IPR035949">
    <property type="entry name" value="SopE-like_GEF_dom_sf"/>
</dbReference>
<dbReference type="InterPro" id="IPR016019">
    <property type="entry name" value="SopE_GEF_dom"/>
</dbReference>
<dbReference type="InterPro" id="IPR016018">
    <property type="entry name" value="SopE_N_dom"/>
</dbReference>
<dbReference type="NCBIfam" id="NF011809">
    <property type="entry name" value="PRK15279.1"/>
    <property type="match status" value="1"/>
</dbReference>
<dbReference type="NCBIfam" id="NF011810">
    <property type="entry name" value="PRK15280.1"/>
    <property type="match status" value="1"/>
</dbReference>
<dbReference type="Pfam" id="PF05364">
    <property type="entry name" value="SecIII_SopE_N"/>
    <property type="match status" value="1"/>
</dbReference>
<dbReference type="Pfam" id="PF07487">
    <property type="entry name" value="SopE_GEF"/>
    <property type="match status" value="1"/>
</dbReference>
<dbReference type="PIRSF" id="PIRSF034781">
    <property type="entry name" value="SecIII_sopE"/>
    <property type="match status" value="1"/>
</dbReference>
<dbReference type="PRINTS" id="PR01593">
    <property type="entry name" value="SOPEPROTEIN"/>
</dbReference>
<dbReference type="SUPFAM" id="SSF81832">
    <property type="entry name" value="SopE-like GEF domain"/>
    <property type="match status" value="1"/>
</dbReference>
<evidence type="ECO:0000250" key="1"/>
<evidence type="ECO:0000305" key="2"/>
<proteinExistence type="inferred from homology"/>
<gene>
    <name type="primary">sopE</name>
</gene>
<accession>Q8VSR2</accession>
<accession>Q8VSR3</accession>
<organism>
    <name type="scientific">Salmonella houtenae</name>
    <dbReference type="NCBI Taxonomy" id="59205"/>
    <lineage>
        <taxon>Bacteria</taxon>
        <taxon>Pseudomonadati</taxon>
        <taxon>Pseudomonadota</taxon>
        <taxon>Gammaproteobacteria</taxon>
        <taxon>Enterobacterales</taxon>
        <taxon>Enterobacteriaceae</taxon>
        <taxon>Salmonella</taxon>
    </lineage>
</organism>
<comment type="function">
    <text evidence="1">Activator for both CDC42 and RAC1 by directly engaging these Rho GTPases and acting as potent guanine nucleotide exchange factor (GEF). This activation results in actin cytoskeleton rearrangements and stimulates membrane ruffling, promoting bacterial entry into non-phagocytic cells (By similarity).</text>
</comment>
<comment type="subcellular location">
    <subcellularLocation>
        <location evidence="1">Secreted</location>
    </subcellularLocation>
    <text evidence="1">Secreted via the type III secretion system 1 (SPI-1 T3SS).</text>
</comment>
<comment type="miscellaneous">
    <text>Encoded within a lambda-like prophage region with similarity to GIFSY phages.</text>
</comment>
<comment type="similarity">
    <text evidence="2">Belongs to the GEF (guanine exchange factor) SopE family.</text>
</comment>
<feature type="initiator methionine" description="Removed" evidence="1">
    <location>
        <position position="1"/>
    </location>
</feature>
<feature type="chain" id="PRO_0000220737" description="Guanine nucleotide exchange factor SopE">
    <location>
        <begin position="2"/>
        <end position="240"/>
    </location>
</feature>
<feature type="region of interest" description="GEF catalytic domain" evidence="1">
    <location>
        <begin position="78"/>
        <end position="240"/>
    </location>
</feature>
<feature type="sequence variant" description="In strain: SARC9 / s3015.">
    <original>S</original>
    <variation>L</variation>
    <location>
        <position position="55"/>
    </location>
</feature>
<feature type="sequence variant" description="In strain: SARC9 / s3015.">
    <original>I</original>
    <variation>R</variation>
    <location>
        <position position="97"/>
    </location>
</feature>
<feature type="sequence variant" description="In strain: SARC9 / s3015.">
    <original>S</original>
    <variation>C</variation>
    <location>
        <position position="182"/>
    </location>
</feature>
<sequence length="240" mass="26537">MTKITLSLQNFRIQKQEITPLKEKSTEKTSLAKAILAVKNHFNKLSSNLSERFISHKNTESSATHSHRGSASEDRAVLTNKVVKEFMLQTLNDMDIIGNASKDPAYASQTREAILSAVYSKNKDQCCKLLISKGINIAPFLKEIGEAAQNAGLPGATKNDVFTPSGAGANPFITPLVSSANSKYPHMFINQHQQASFKIYAEKIIMTEVAPLFNECVMPTPQQFHLILENIANKYIQNTP</sequence>
<name>SOPE_SALHO</name>
<keyword id="KW-0343">GTPase activation</keyword>
<keyword id="KW-0344">Guanine-nucleotide releasing factor</keyword>
<keyword id="KW-0964">Secreted</keyword>
<keyword id="KW-0843">Virulence</keyword>
<reference key="1">
    <citation type="journal article" date="2001" name="J. Mol. Biol.">
        <title>Transfer of the Salmonella type III effector sopE between unrelated phage families.</title>
        <authorList>
            <person name="Mirold S."/>
            <person name="Rabsch W."/>
            <person name="Tschaepe H."/>
            <person name="Hardt W.-D."/>
        </authorList>
    </citation>
    <scope>NUCLEOTIDE SEQUENCE [GENOMIC DNA]</scope>
    <source>
        <strain>SARC10 / s3027</strain>
        <strain>SARC9 / s3015</strain>
    </source>
</reference>